<keyword id="KW-0963">Cytoplasm</keyword>
<keyword id="KW-0255">Endonuclease</keyword>
<keyword id="KW-0378">Hydrolase</keyword>
<keyword id="KW-0460">Magnesium</keyword>
<keyword id="KW-0479">Metal-binding</keyword>
<keyword id="KW-0540">Nuclease</keyword>
<keyword id="KW-1185">Reference proteome</keyword>
<feature type="chain" id="PRO_0000195390" description="Ribonuclease HI">
    <location>
        <begin position="1"/>
        <end position="148"/>
    </location>
</feature>
<feature type="domain" description="RNase H type-1" evidence="2">
    <location>
        <begin position="1"/>
        <end position="142"/>
    </location>
</feature>
<feature type="binding site" evidence="1">
    <location>
        <position position="10"/>
    </location>
    <ligand>
        <name>Mg(2+)</name>
        <dbReference type="ChEBI" id="CHEBI:18420"/>
        <label>1</label>
    </ligand>
</feature>
<feature type="binding site" evidence="1">
    <location>
        <position position="10"/>
    </location>
    <ligand>
        <name>Mg(2+)</name>
        <dbReference type="ChEBI" id="CHEBI:18420"/>
        <label>2</label>
    </ligand>
</feature>
<feature type="binding site" evidence="1">
    <location>
        <position position="48"/>
    </location>
    <ligand>
        <name>Mg(2+)</name>
        <dbReference type="ChEBI" id="CHEBI:18420"/>
        <label>1</label>
    </ligand>
</feature>
<feature type="binding site" evidence="1">
    <location>
        <position position="70"/>
    </location>
    <ligand>
        <name>Mg(2+)</name>
        <dbReference type="ChEBI" id="CHEBI:18420"/>
        <label>1</label>
    </ligand>
</feature>
<feature type="binding site" evidence="1">
    <location>
        <position position="134"/>
    </location>
    <ligand>
        <name>Mg(2+)</name>
        <dbReference type="ChEBI" id="CHEBI:18420"/>
        <label>2</label>
    </ligand>
</feature>
<dbReference type="EC" id="3.1.26.4" evidence="1"/>
<dbReference type="EMBL" id="AE015451">
    <property type="protein sequence ID" value="AAN69724.1"/>
    <property type="molecule type" value="Genomic_DNA"/>
</dbReference>
<dbReference type="RefSeq" id="NP_746260.1">
    <property type="nucleotide sequence ID" value="NC_002947.4"/>
</dbReference>
<dbReference type="RefSeq" id="WP_003251460.1">
    <property type="nucleotide sequence ID" value="NZ_CP169744.1"/>
</dbReference>
<dbReference type="SMR" id="Q88FF5"/>
<dbReference type="STRING" id="160488.PP_4142"/>
<dbReference type="PaxDb" id="160488-PP_4142"/>
<dbReference type="GeneID" id="83679168"/>
<dbReference type="KEGG" id="ppu:PP_4142"/>
<dbReference type="PATRIC" id="fig|160488.4.peg.4402"/>
<dbReference type="eggNOG" id="COG0328">
    <property type="taxonomic scope" value="Bacteria"/>
</dbReference>
<dbReference type="HOGENOM" id="CLU_030894_6_0_6"/>
<dbReference type="OrthoDB" id="7845843at2"/>
<dbReference type="PhylomeDB" id="Q88FF5"/>
<dbReference type="BioCyc" id="PPUT160488:G1G01-4409-MONOMER"/>
<dbReference type="Proteomes" id="UP000000556">
    <property type="component" value="Chromosome"/>
</dbReference>
<dbReference type="GO" id="GO:0005737">
    <property type="term" value="C:cytoplasm"/>
    <property type="evidence" value="ECO:0007669"/>
    <property type="project" value="UniProtKB-SubCell"/>
</dbReference>
<dbReference type="GO" id="GO:0000287">
    <property type="term" value="F:magnesium ion binding"/>
    <property type="evidence" value="ECO:0007669"/>
    <property type="project" value="UniProtKB-UniRule"/>
</dbReference>
<dbReference type="GO" id="GO:0003676">
    <property type="term" value="F:nucleic acid binding"/>
    <property type="evidence" value="ECO:0007669"/>
    <property type="project" value="InterPro"/>
</dbReference>
<dbReference type="GO" id="GO:0004523">
    <property type="term" value="F:RNA-DNA hybrid ribonuclease activity"/>
    <property type="evidence" value="ECO:0007669"/>
    <property type="project" value="UniProtKB-UniRule"/>
</dbReference>
<dbReference type="GO" id="GO:0043137">
    <property type="term" value="P:DNA replication, removal of RNA primer"/>
    <property type="evidence" value="ECO:0007669"/>
    <property type="project" value="TreeGrafter"/>
</dbReference>
<dbReference type="CDD" id="cd09278">
    <property type="entry name" value="RNase_HI_prokaryote_like"/>
    <property type="match status" value="1"/>
</dbReference>
<dbReference type="FunFam" id="3.30.420.10:FF:000089">
    <property type="entry name" value="Ribonuclease H"/>
    <property type="match status" value="1"/>
</dbReference>
<dbReference type="Gene3D" id="3.30.420.10">
    <property type="entry name" value="Ribonuclease H-like superfamily/Ribonuclease H"/>
    <property type="match status" value="1"/>
</dbReference>
<dbReference type="HAMAP" id="MF_00042">
    <property type="entry name" value="RNase_H"/>
    <property type="match status" value="1"/>
</dbReference>
<dbReference type="InterPro" id="IPR050092">
    <property type="entry name" value="RNase_H"/>
</dbReference>
<dbReference type="InterPro" id="IPR012337">
    <property type="entry name" value="RNaseH-like_sf"/>
</dbReference>
<dbReference type="InterPro" id="IPR002156">
    <property type="entry name" value="RNaseH_domain"/>
</dbReference>
<dbReference type="InterPro" id="IPR036397">
    <property type="entry name" value="RNaseH_sf"/>
</dbReference>
<dbReference type="InterPro" id="IPR022892">
    <property type="entry name" value="RNaseHI"/>
</dbReference>
<dbReference type="NCBIfam" id="NF001236">
    <property type="entry name" value="PRK00203.1"/>
    <property type="match status" value="1"/>
</dbReference>
<dbReference type="PANTHER" id="PTHR10642">
    <property type="entry name" value="RIBONUCLEASE H1"/>
    <property type="match status" value="1"/>
</dbReference>
<dbReference type="PANTHER" id="PTHR10642:SF26">
    <property type="entry name" value="RIBONUCLEASE H1"/>
    <property type="match status" value="1"/>
</dbReference>
<dbReference type="Pfam" id="PF00075">
    <property type="entry name" value="RNase_H"/>
    <property type="match status" value="1"/>
</dbReference>
<dbReference type="SUPFAM" id="SSF53098">
    <property type="entry name" value="Ribonuclease H-like"/>
    <property type="match status" value="1"/>
</dbReference>
<dbReference type="PROSITE" id="PS50879">
    <property type="entry name" value="RNASE_H_1"/>
    <property type="match status" value="1"/>
</dbReference>
<protein>
    <recommendedName>
        <fullName evidence="1">Ribonuclease HI</fullName>
        <shortName evidence="1">RNase HI</shortName>
        <ecNumber evidence="1">3.1.26.4</ecNumber>
    </recommendedName>
</protein>
<sequence length="148" mass="16913">MSDSVEMFTDGACKGNPGPGGWGVLMIYKGVEKELWGGERETTNNRMELMAAIQGLMSLKRECEVVLTTDSQYVMKGINEWMVNWKKRGWKTAAKEPVKNADLWQQLDEQVNRHKVTWKWVRGHIGHPGNERADQLANRGVDEVRAQR</sequence>
<comment type="function">
    <text evidence="1">Endonuclease that specifically degrades the RNA of RNA-DNA hybrids.</text>
</comment>
<comment type="catalytic activity">
    <reaction evidence="1">
        <text>Endonucleolytic cleavage to 5'-phosphomonoester.</text>
        <dbReference type="EC" id="3.1.26.4"/>
    </reaction>
</comment>
<comment type="cofactor">
    <cofactor evidence="1">
        <name>Mg(2+)</name>
        <dbReference type="ChEBI" id="CHEBI:18420"/>
    </cofactor>
    <text evidence="1">Binds 1 Mg(2+) ion per subunit. May bind a second metal ion at a regulatory site, or after substrate binding.</text>
</comment>
<comment type="subunit">
    <text evidence="1">Monomer.</text>
</comment>
<comment type="subcellular location">
    <subcellularLocation>
        <location evidence="1">Cytoplasm</location>
    </subcellularLocation>
</comment>
<comment type="similarity">
    <text evidence="1">Belongs to the RNase H family.</text>
</comment>
<accession>Q88FF5</accession>
<organism>
    <name type="scientific">Pseudomonas putida (strain ATCC 47054 / DSM 6125 / CFBP 8728 / NCIMB 11950 / KT2440)</name>
    <dbReference type="NCBI Taxonomy" id="160488"/>
    <lineage>
        <taxon>Bacteria</taxon>
        <taxon>Pseudomonadati</taxon>
        <taxon>Pseudomonadota</taxon>
        <taxon>Gammaproteobacteria</taxon>
        <taxon>Pseudomonadales</taxon>
        <taxon>Pseudomonadaceae</taxon>
        <taxon>Pseudomonas</taxon>
    </lineage>
</organism>
<name>RNH_PSEPK</name>
<gene>
    <name evidence="1" type="primary">rnhA</name>
    <name type="ordered locus">PP_4142</name>
</gene>
<proteinExistence type="inferred from homology"/>
<evidence type="ECO:0000255" key="1">
    <source>
        <dbReference type="HAMAP-Rule" id="MF_00042"/>
    </source>
</evidence>
<evidence type="ECO:0000255" key="2">
    <source>
        <dbReference type="PROSITE-ProRule" id="PRU00408"/>
    </source>
</evidence>
<reference key="1">
    <citation type="journal article" date="2002" name="Environ. Microbiol.">
        <title>Complete genome sequence and comparative analysis of the metabolically versatile Pseudomonas putida KT2440.</title>
        <authorList>
            <person name="Nelson K.E."/>
            <person name="Weinel C."/>
            <person name="Paulsen I.T."/>
            <person name="Dodson R.J."/>
            <person name="Hilbert H."/>
            <person name="Martins dos Santos V.A.P."/>
            <person name="Fouts D.E."/>
            <person name="Gill S.R."/>
            <person name="Pop M."/>
            <person name="Holmes M."/>
            <person name="Brinkac L.M."/>
            <person name="Beanan M.J."/>
            <person name="DeBoy R.T."/>
            <person name="Daugherty S.C."/>
            <person name="Kolonay J.F."/>
            <person name="Madupu R."/>
            <person name="Nelson W.C."/>
            <person name="White O."/>
            <person name="Peterson J.D."/>
            <person name="Khouri H.M."/>
            <person name="Hance I."/>
            <person name="Chris Lee P."/>
            <person name="Holtzapple E.K."/>
            <person name="Scanlan D."/>
            <person name="Tran K."/>
            <person name="Moazzez A."/>
            <person name="Utterback T.R."/>
            <person name="Rizzo M."/>
            <person name="Lee K."/>
            <person name="Kosack D."/>
            <person name="Moestl D."/>
            <person name="Wedler H."/>
            <person name="Lauber J."/>
            <person name="Stjepandic D."/>
            <person name="Hoheisel J."/>
            <person name="Straetz M."/>
            <person name="Heim S."/>
            <person name="Kiewitz C."/>
            <person name="Eisen J.A."/>
            <person name="Timmis K.N."/>
            <person name="Duesterhoeft A."/>
            <person name="Tuemmler B."/>
            <person name="Fraser C.M."/>
        </authorList>
    </citation>
    <scope>NUCLEOTIDE SEQUENCE [LARGE SCALE GENOMIC DNA]</scope>
    <source>
        <strain>ATCC 47054 / DSM 6125 / CFBP 8728 / NCIMB 11950 / KT2440</strain>
    </source>
</reference>